<keyword id="KW-0106">Calcium</keyword>
<keyword id="KW-0449">Lipoprotein</keyword>
<keyword id="KW-0479">Metal-binding</keyword>
<keyword id="KW-0519">Myristate</keyword>
<keyword id="KW-0677">Repeat</keyword>
<keyword id="KW-0716">Sensory transduction</keyword>
<keyword id="KW-0844">Vision</keyword>
<organism>
    <name type="scientific">Lithobates pipiens</name>
    <name type="common">Northern leopard frog</name>
    <name type="synonym">Rana pipiens</name>
    <dbReference type="NCBI Taxonomy" id="8404"/>
    <lineage>
        <taxon>Eukaryota</taxon>
        <taxon>Metazoa</taxon>
        <taxon>Chordata</taxon>
        <taxon>Craniata</taxon>
        <taxon>Vertebrata</taxon>
        <taxon>Euteleostomi</taxon>
        <taxon>Amphibia</taxon>
        <taxon>Batrachia</taxon>
        <taxon>Anura</taxon>
        <taxon>Neobatrachia</taxon>
        <taxon>Ranoidea</taxon>
        <taxon>Ranidae</taxon>
        <taxon>Lithobates</taxon>
    </lineage>
</organism>
<dbReference type="EMBL" id="AF047883">
    <property type="protein sequence ID" value="AAC15877.1"/>
    <property type="molecule type" value="mRNA"/>
</dbReference>
<dbReference type="SMR" id="O73762"/>
<dbReference type="GO" id="GO:0120199">
    <property type="term" value="C:cone photoreceptor outer segment"/>
    <property type="evidence" value="ECO:0007669"/>
    <property type="project" value="TreeGrafter"/>
</dbReference>
<dbReference type="GO" id="GO:0001917">
    <property type="term" value="C:photoreceptor inner segment"/>
    <property type="evidence" value="ECO:0007669"/>
    <property type="project" value="TreeGrafter"/>
</dbReference>
<dbReference type="GO" id="GO:0005509">
    <property type="term" value="F:calcium ion binding"/>
    <property type="evidence" value="ECO:0007669"/>
    <property type="project" value="InterPro"/>
</dbReference>
<dbReference type="GO" id="GO:0008048">
    <property type="term" value="F:calcium sensitive guanylate cyclase activator activity"/>
    <property type="evidence" value="ECO:0007669"/>
    <property type="project" value="TreeGrafter"/>
</dbReference>
<dbReference type="GO" id="GO:0007601">
    <property type="term" value="P:visual perception"/>
    <property type="evidence" value="ECO:0007669"/>
    <property type="project" value="UniProtKB-KW"/>
</dbReference>
<dbReference type="CDD" id="cd00051">
    <property type="entry name" value="EFh"/>
    <property type="match status" value="2"/>
</dbReference>
<dbReference type="FunFam" id="1.10.238.10:FF:000052">
    <property type="entry name" value="Guanylate cyclase activator 1A"/>
    <property type="match status" value="1"/>
</dbReference>
<dbReference type="Gene3D" id="1.10.238.10">
    <property type="entry name" value="EF-hand"/>
    <property type="match status" value="2"/>
</dbReference>
<dbReference type="InterPro" id="IPR011992">
    <property type="entry name" value="EF-hand-dom_pair"/>
</dbReference>
<dbReference type="InterPro" id="IPR018247">
    <property type="entry name" value="EF_Hand_1_Ca_BS"/>
</dbReference>
<dbReference type="InterPro" id="IPR002048">
    <property type="entry name" value="EF_hand_dom"/>
</dbReference>
<dbReference type="InterPro" id="IPR028846">
    <property type="entry name" value="Recoverin"/>
</dbReference>
<dbReference type="PANTHER" id="PTHR23055">
    <property type="entry name" value="CALCIUM BINDING PROTEINS"/>
    <property type="match status" value="1"/>
</dbReference>
<dbReference type="PANTHER" id="PTHR23055:SF11">
    <property type="entry name" value="GUANYLYL CYCLASE-ACTIVATING PROTEIN 2"/>
    <property type="match status" value="1"/>
</dbReference>
<dbReference type="Pfam" id="PF00036">
    <property type="entry name" value="EF-hand_1"/>
    <property type="match status" value="1"/>
</dbReference>
<dbReference type="Pfam" id="PF13499">
    <property type="entry name" value="EF-hand_7"/>
    <property type="match status" value="1"/>
</dbReference>
<dbReference type="PRINTS" id="PR00450">
    <property type="entry name" value="RECOVERIN"/>
</dbReference>
<dbReference type="SMART" id="SM00054">
    <property type="entry name" value="EFh"/>
    <property type="match status" value="3"/>
</dbReference>
<dbReference type="SUPFAM" id="SSF47473">
    <property type="entry name" value="EF-hand"/>
    <property type="match status" value="1"/>
</dbReference>
<dbReference type="PROSITE" id="PS00018">
    <property type="entry name" value="EF_HAND_1"/>
    <property type="match status" value="3"/>
</dbReference>
<dbReference type="PROSITE" id="PS50222">
    <property type="entry name" value="EF_HAND_2"/>
    <property type="match status" value="3"/>
</dbReference>
<reference key="1">
    <citation type="journal article" date="1998" name="Eur. J. Biochem.">
        <title>Guanylate-cyclase-inhibitory protein is a frog retinal Ca2+-binding protein related to mammalian guanylate-cyclase-activating proteins.</title>
        <authorList>
            <person name="Li N."/>
            <person name="Fariss R.N."/>
            <person name="Zhang K."/>
            <person name="Otto-Bruc A.E."/>
            <person name="Haeseleer F."/>
            <person name="Bronson J.D."/>
            <person name="Qin N."/>
            <person name="Yamazaki A."/>
            <person name="Subbaraya I."/>
            <person name="Milam A.H."/>
            <person name="Palczewski K."/>
            <person name="Baehr W."/>
        </authorList>
    </citation>
    <scope>NUCLEOTIDE SEQUENCE [MRNA]</scope>
    <source>
        <tissue>Retina</tissue>
    </source>
</reference>
<gene>
    <name type="primary">GUCA1B</name>
    <name type="synonym">GCAP2</name>
</gene>
<proteinExistence type="evidence at transcript level"/>
<evidence type="ECO:0000250" key="1"/>
<evidence type="ECO:0000255" key="2"/>
<evidence type="ECO:0000255" key="3">
    <source>
        <dbReference type="PROSITE-ProRule" id="PRU00448"/>
    </source>
</evidence>
<evidence type="ECO:0000305" key="4"/>
<sequence length="197" mass="23019">MGQHLSEESNKVEIDVAELQEWYKKFVVECPSGTLFMHEFKRFFGVQDNQEAADYVEHMFRAFDKNGDNTIDFLEYVAALNLVLRGKLEHKLKWTFKVYDRDGNGCIDKTELLEIVESIYNLKKVCRQGQDDRIPLLSPEQVVDRIFQLVDENGDGQLSLDEFIDGARKDKWVMKMLQMDVSPGSWINEQRRKSALF</sequence>
<protein>
    <recommendedName>
        <fullName>Guanylyl cyclase-activating protein 2</fullName>
        <shortName>GCAP 2</shortName>
    </recommendedName>
    <alternativeName>
        <fullName>Guanylate cyclase activator 1B</fullName>
    </alternativeName>
</protein>
<feature type="initiator methionine" description="Removed" evidence="2">
    <location>
        <position position="1"/>
    </location>
</feature>
<feature type="chain" id="PRO_0000073811" description="Guanylyl cyclase-activating protein 2">
    <location>
        <begin position="2"/>
        <end position="197"/>
    </location>
</feature>
<feature type="domain" description="EF-hand 1" evidence="4">
    <location>
        <begin position="15"/>
        <end position="50"/>
    </location>
</feature>
<feature type="domain" description="EF-hand 2" evidence="3">
    <location>
        <begin position="51"/>
        <end position="86"/>
    </location>
</feature>
<feature type="domain" description="EF-hand 3" evidence="3">
    <location>
        <begin position="87"/>
        <end position="122"/>
    </location>
</feature>
<feature type="domain" description="EF-hand 4" evidence="3">
    <location>
        <begin position="138"/>
        <end position="173"/>
    </location>
</feature>
<feature type="binding site" evidence="3">
    <location>
        <position position="64"/>
    </location>
    <ligand>
        <name>Ca(2+)</name>
        <dbReference type="ChEBI" id="CHEBI:29108"/>
        <label>1</label>
    </ligand>
</feature>
<feature type="binding site" evidence="3">
    <location>
        <position position="66"/>
    </location>
    <ligand>
        <name>Ca(2+)</name>
        <dbReference type="ChEBI" id="CHEBI:29108"/>
        <label>1</label>
    </ligand>
</feature>
<feature type="binding site" evidence="3">
    <location>
        <position position="68"/>
    </location>
    <ligand>
        <name>Ca(2+)</name>
        <dbReference type="ChEBI" id="CHEBI:29108"/>
        <label>1</label>
    </ligand>
</feature>
<feature type="binding site" evidence="3">
    <location>
        <position position="70"/>
    </location>
    <ligand>
        <name>Ca(2+)</name>
        <dbReference type="ChEBI" id="CHEBI:29108"/>
        <label>1</label>
    </ligand>
</feature>
<feature type="binding site" evidence="3">
    <location>
        <position position="75"/>
    </location>
    <ligand>
        <name>Ca(2+)</name>
        <dbReference type="ChEBI" id="CHEBI:29108"/>
        <label>1</label>
    </ligand>
</feature>
<feature type="binding site" evidence="3">
    <location>
        <position position="100"/>
    </location>
    <ligand>
        <name>Ca(2+)</name>
        <dbReference type="ChEBI" id="CHEBI:29108"/>
        <label>2</label>
    </ligand>
</feature>
<feature type="binding site" evidence="3">
    <location>
        <position position="102"/>
    </location>
    <ligand>
        <name>Ca(2+)</name>
        <dbReference type="ChEBI" id="CHEBI:29108"/>
        <label>2</label>
    </ligand>
</feature>
<feature type="binding site" evidence="3">
    <location>
        <position position="104"/>
    </location>
    <ligand>
        <name>Ca(2+)</name>
        <dbReference type="ChEBI" id="CHEBI:29108"/>
        <label>2</label>
    </ligand>
</feature>
<feature type="binding site" evidence="3">
    <location>
        <position position="106"/>
    </location>
    <ligand>
        <name>Ca(2+)</name>
        <dbReference type="ChEBI" id="CHEBI:29108"/>
        <label>2</label>
    </ligand>
</feature>
<feature type="binding site" evidence="3">
    <location>
        <position position="111"/>
    </location>
    <ligand>
        <name>Ca(2+)</name>
        <dbReference type="ChEBI" id="CHEBI:29108"/>
        <label>2</label>
    </ligand>
</feature>
<feature type="binding site" evidence="3">
    <location>
        <position position="151"/>
    </location>
    <ligand>
        <name>Ca(2+)</name>
        <dbReference type="ChEBI" id="CHEBI:29108"/>
        <label>3</label>
    </ligand>
</feature>
<feature type="binding site" evidence="3">
    <location>
        <position position="153"/>
    </location>
    <ligand>
        <name>Ca(2+)</name>
        <dbReference type="ChEBI" id="CHEBI:29108"/>
        <label>3</label>
    </ligand>
</feature>
<feature type="binding site" evidence="3">
    <location>
        <position position="155"/>
    </location>
    <ligand>
        <name>Ca(2+)</name>
        <dbReference type="ChEBI" id="CHEBI:29108"/>
        <label>3</label>
    </ligand>
</feature>
<feature type="binding site" evidence="3">
    <location>
        <position position="157"/>
    </location>
    <ligand>
        <name>Ca(2+)</name>
        <dbReference type="ChEBI" id="CHEBI:29108"/>
        <label>3</label>
    </ligand>
</feature>
<feature type="binding site" evidence="3">
    <location>
        <position position="162"/>
    </location>
    <ligand>
        <name>Ca(2+)</name>
        <dbReference type="ChEBI" id="CHEBI:29108"/>
        <label>3</label>
    </ligand>
</feature>
<feature type="lipid moiety-binding region" description="N-myristoyl glycine" evidence="2">
    <location>
        <position position="2"/>
    </location>
</feature>
<accession>O73762</accession>
<name>GUC1B_LITPI</name>
<comment type="function">
    <text evidence="1">Stimulates guanylyl cyclase 1 (GC1) and GC2 when free calcium ions concentration is low and inhibits guanylyl cyclases when free calcium ions concentration is elevated. This Ca(2+)-sensitive regulation of guanylyl cyclase (GC) is a key event in recovery of the dark state of rod photoreceptors following light exposure (By similarity).</text>
</comment>
<comment type="tissue specificity">
    <text>Low expression in retina.</text>
</comment>
<comment type="miscellaneous">
    <text evidence="1">Binds three calcium ions.</text>
</comment>